<sequence length="9159" mass="927738">MSQTAKPIFAVVVALIVLISGVAFIGSVSAQQPNLVQNGSFENSSNDFSSDNNYNTLVADSTAITGWRVSSGEVDQVGSYWSPQDGSVSIDLSGSEPGVIEQNVTGLEAGKRYELTYYYSGHRVQEGKYEAGVEIADLNITETASSPGDWTLATHTFTADSTAETLTFTQITPSSGAKGMAIDNVSIVESSDPIDTAAPTVSVNQPAGGATLTTSDVALNASANETGNWTYSVDGGPNQTATDANGTKTLNVTLSGLADGSHTATVYIKDDGGNIGIDTVSFTISSAPTVTTSSGGTNYTASTGGFVVDENLTVTNPDGGTIDGATIAIGSGFNASVDTLAIDEAVAPNNSITSTNYNGTTGVLTLDGTASAAEMQTVLRTVTYAYSGETTASARDIDVSFALGTGGNNSSTPTTAQITVTVSSDTTAPSVTIDQPVEGSTLTTGDVAFDASANKTGNWTYSVDGDPNQTATGANGTQTLNVTLSGLADGSHTATVYIKDDGGNVDTDTVSFTVSTASSLTTSSSKTDYTASDGGFVVDDSLTVTSPDDTLINGATVAIGSGFDASEDTLAVNETVASNNNITNTNYNSATGVLTLDGTASADEMQTVLRTVTYTYSGDATASARDLDVSFSLGTGGNIVFDPTTGNYYELVSETVTWKTAKDEAENRSHLGLQGYLATLTSERENDETASRFTFDKAWIGASDASTEGDWKWVTGPERGTLFWEGDESGSEQNGEYAGWASTDPNAIQGENYAFINQNLEWIDQKNGVNYNYLVEYGGLNGSSSPTAQRTVTVDTEAPTLTTSSGSVTNTTASGGYLVDDKLTVTDPDGGGIDTATVSISQGFDPSADRLSVNTTLATNRGITSTYDDTTGVLNVSANSSATVTADDFQAVLRTVTYNFTGTSVTNESDRTVPIRFALDANQEQVTAYDGHYYEYVSDSVSFDTARSEAENRSHLGLEGYLATLTSEQEDDTIHQQFDQESWIGASDAETEGDWKWVTGPENGTLFWKDGSTQNGEYAGWEGGEPNSQNLDENYAEINFDDYTGWNDQVDNQGYLVEYGGLTTDSAITAQRNVTIDTGAPNVSNVTIRRIDGGGVVTTNDTIEVSATVTDVSSIQSVTASAIAFDAGTVNLSDDGPNSSAADDVYSATFTVGPDPIEQTQSVTVTATDDAGNGGTPPGDLVYDSITVNPEGTTDFRTVRLPRSFENPVVIAKPLESTSSGNVAPDNRRGHTRIRNVQSTSFEIRVEEWSVQDDEDHPAANVSYIVAEAGTTTLDDSTKVSAGTITLNQNDGFQSITFEESLNSPVAFTQPQTVNDPDAVSTRNNNVGSNGLDSKIEDDQNNGADGNPHGTETLGYIAIEQGDSVLGETGFTAGTQGNVDETLTSINFGDSYPAGFVAAMQTTGGTEQSYLRYDDRTDTGVRVRIEEDPVDNSDRHNSETVGYLAWNASTQVTGTRSNELSVDTSAPQIDDLSASFTTGSPPVSAGDEFRVTATVTDAGAVSTVEADVAALDADPGTITLDDLGNDTYEGTFEVGQNPDPTRAVAVTVTDSLGNNASATTIAGSQASWDHEVNGTVQTGTFAGNGSAVDPYIIDSLVDLQAINKNATTRAYNYRLGTDIDASTTRSWNDGKGFAPVGAVNGRDIGEPFSGSLDGDGYTISNLSVDQRSTDTNALGLVGKLDSDGAVRNLTLANASVAGDDDIGAAVGKSAGTVRNVTVSGMVDGDQRIGGVVGTVTSTGTVTNTTAVANTSGNQGVGGLIGESSGTVNNASAGGAVTATGQYAGGLIGDHQSSTAVTDVNASGAVTGASYTGGLVGRGQAGVINASANGDVTSTTGEYVGGLVGQLQAQHGDEEVRNVTASGNVSSGGQYVGGLIGDVRDDGTNYVAMSEAHATGNVNTTYADESGFNNAYVGGLVGHFKGSEFTDISATGDVTSTTGNEVGGLVGRVAMEQERDIVANASATGNVTTTGQRVGGLIGYHRTGTILRNVTATGDVSTDGQRVGGLVGDTDASITDASATGEVTTSTSGEYVGGLVGQLQAQHGDEEVRNVTASGNVSSGGRYVGGLIGDVSDDGTHYVAMSEAHATGHVNTTYADESGFNNAYVGGLVGHFEGSEFTDISATGDVTSTAGNEVGGLVGRVAMEQERDIVANASATGNVTTTGQRVGGLIGYHRTGTILRNVTATGDVSTDGQRVGGLVGDTDASITDASATGEVTTSTTGEYVGGLVGQLRAQHGDEEVRNVTASGNVSSGGQYVGGLMGYVDDNNNRGRYVAMSEAHATGNVNTTYADESGFNNAYVGGLVGHFKGSEFTDISATGDVTSTTGNEVGGLVGRVVMRNNGIVANASATGNVTTTGQRVGGLIGYHRTGTILRNVTATGDVSTDGQRVGGLVGDTDASITDASATGEVTTSTTGEYVGGLVGQLRAQHGDEEVRNVTASGNVSSGGQYVGGLMGYVDDNNNEGRYVAMSEAHATGNVNTTYDGGSNAYVGGLVGRFKGSEFTDISATGDVTSTTGNEVGGLVGRVAMRNNGIVANASATGNVTTTGQQIGGLIGYHQNGDGVETSYARGDVSTDGNYVGGLIGDTNDGSITDSYARGDVNSSGDYVGGLVGEANGDVTRAYASGRVEGDGTDIGGLVGTNNGGTLSDAYWDRGATNQTAATGSGTPPGATGYGTVGDTRALEMQGRAPTQFMAALNYTSPWKLTSTYPIFQRESATSGSLPATVDTIEASTATVVQTQQMTVKLNATINGSRVGPGYLITVSDSNGLAELEGQRALTDQNGTATFTFAEQSAGTFTPTFEAVSDLNVTATATVEVNEGAARTYIREDGTELTAVYSGNGTVDDPYEIDSLADLQAINNNTAARDNHYELVANIDTSATNNTSWNNGNGFEPITEYTGSLDGNGRTISNLSINRSGANGVGLVDTLGSEGTIQNLTIQNASITGDNDLGVAVGINNGRVENVTASGTVSGNDRIGGLVGTVNSGGVITASTAAATTSGSKSIGGLVGQNNGAVNNASASGTVTATGQYAGGLIGDHRSTISIVDTNASGAVTGTSSTGGLIGRAQANVTDSSASGRVNGTTGSNVGGLIGEHDPSQVATIANVSASGDVSTSGGVRVGGLVGSSISGSPVTMLNARAEGNVTTSDLSGTDAFTGGLIGEIQNAKNVTNVSATGQVNASIAGNQVVTGRVGGLIGSFEHESASRIVANASATGDVATDTNGQVGGLIGTYSGGGTVEDSNARGNVSATGQSVGGLLGSADASIIRRSSATGDVNSTGSNVGGLIGKHDPSQVATIANVSASGNVSTRNQGAGGLVGAIQTSPVSISDAGASGDVTAAVGSGRGYVGGLIGEIRNAKNVTNVSASGQVNVSANTGFNGEHVGGLIGVIDHESGANIVANASATGDVNADAAGPTGGLIGGTEGTLGTVQDSYAQGNVSGTGPVGGLIGQTNGDTARVYASGRVEGNSGLGGLIGDNSGQISESYWDKGATAQSDATGSGTPGGATGYGSVGDTTPAPQMQGRAATELMDGLHYTTTWNVTRGYPVLQAQSNGTEQPPRTVDTVTATNASAIQSEQVSVSVTVTTAGTDTGTGTAAGLIVSAQDTGGLTSLNNATAVTNETGTATLTITESDTGTFSPTFTVVGYSTATANATVTVSDGAVRTYVREDGEELTAVYSGNGTADNPYLIDSLADLQAIDNSSAARADNYRLAEDIDASATSDASWNDGSGFEPITPFTGSLDGNDTTISNLSINRSGASTAGLVGALDSNGAIQNLTIQNASVTGSDELGVVAGTNDGTIQNLTVEDASIDGVNDLGVAVGTNNGTVQNVTASGAVRGSDRIGGLVGTVNSGGVVTDATTTATANGSQSIGGLVGESNGAVNNASASGTVTATDQYAGGLIGDHQSTTPVTDVNASGAVTGTSYIGGLLGRGQADVINASAGGSVNGTSGGYVGGLIGQAKSSSGNPITVSNAHASGVVNATNTGTDAYTGGLVGEFQNAGNVTDVSATGDVNASEPEGGNLVGGLFGELHHDSADHILTNASATGDVDATGQRVGGLIGYYKDGDGVETSYARGNVSTDGDYVGGLIGDTNNDGSITDSYARGDVTTSGDKVGGLVGETEDVDVTRSYASGRVKGGSTVGGLVGNNTGQLSGAYWDKGATNQTAATGSGSSGGATGFGTVGDDTQALEMQGRAPTQFMSALDYTSPWKLTSTYPVFQRESNTSGSLLAPVDTIEATGTTAVQTQQITVEVNATINGSPVGPGYLINVSDSNGLAELDSKTALTDANGTATFTFAGPTAGTFEPEFEAVSNSAASATATVTVESGAVRTFIREDGTELTAVYRGNGTADSPYEVDSLADLQAIDNSTAAHGDQYTLVANIDASATDESSWNGGGGFEPIANATDEAFTGTLNGNGHTISNLSVDRSGANRAGLVGTLGSNGTIQNLTIQNASITGNNDVGTAVGTSAGTIQNVTASGTVNGNDRIGGVVGEVTADGLVTDSTASVNTSGNQAIGGLVGQSSGAVNNASASGEVTATSKYAGGLIGDHQSTTPVTDVNASGTVSGTSSAGGLIGRAQANVTDATATGDVVSTSGTKVGGLIGNHQAGQTIVDVSATGTVSSDGDDVGGLVGFTRASVRNATASGEVESTTGANVGGLVGRLSHDDSTHVTNVTATGTVSAGADHVGGLVGFIEDSDDNGNITMSGARATGDIEMTSDDGGPASVGGLVGRFEHGSAITDVSATGDVSSVGGNEVGGLIGRLDQLASTDVLKNASATGDVTTTGQKVGGLIGFHRTGSVDNSHAQGNVSAGSGDNVGGLIGVHGRNGGRVGDSYARGDVNTSGNNVGGLIGRSEGKVLRVYATGRVEGGSAVGGLVGKNDGGQLSESYWDKGATDKSDATGSDTPATVSGYGSVGDTTPAPQMQGRAATELMEGLNYTTTWNVTRGYPVLQAKSTGTEQLPRTVDTVTATNASAIQSEQVSVSVTVTTTDSNIREDFVISVQDTGGLTSLENATAVTNDTGVATFNITESSPDTYTPTFGVAGYSTATVNATVTVDNGAVRTYTREDDTELTAVYRGNGTPDSPYLIDTLADLQSINIDSGTRNEQYRLAADIDASATNESSWNGGRGFEPITDFTGSLNGDGYAISNLSIDRGNEASVGLFGDTNAGSSITNVTLVQPAVTGGQGTGPLVGSHGGSISRTVVTGGTATTEADGEAHLGGLVGILVDDAKITQSHTSAIVDANGHNEAGGFAGDIGSNARVEQVSATGGVKNGGSEIGGLFGNASSGSEIVEAFAAGNVSGTTNVGGLLGRQDGSAVTVDRAYWDEQSTGQTSSAGDTETALPTVKMQGTAATEFMPGLNFTTTWNTTRDYPVLQVQTTGTEQPPRTVDTIDATNASLVQSEQVSVSITVTASEADSRNGFLISVQDAAGLTSLENATAVTNETGTAAFNLTESDAGTFTPTFGVAGDASATTNATLTVKQGAVRTYTREDGTALTAVYTGNGTPESPYEIDSLADLQAIDNSSTARNNSYRLTADIDASATIESSWNDGSGFEPIANATDDDEAFTGSLDGDGHTISNLSIDRSGADTVGLFGELDTAGVLENVTLQNASVTGGNDVGLVAGTSNGTLRNVTTTGTVTGNNRVGGLIGTTELNSVLTESSAAVNTSGSQRVGGLVGTAGGIVNTSTANGTVTATGQYAGGLIGESQGTIPVTNTAASGNVTGTADVGGLIGRTNTTVRNSSASGVVNSTSGDGVGGLIGRSLAAVHDSSASGAVSSTGGNSVGGLIGNAGADVTNSAGRGNVISSTGNEVGGLVGRLEDSSNIRDSHARGTVTAAGSDVGGLAGTIDTGNATRVFATGQVEGNSAVGGLVGKNNGGTLSDVYWDKGATNQTNATGSATPTGADGYGLVNDDTPAERMQGEAATAFMSALNYTTTWNTTRGYPVLQAQATGTEQPPRRVETIDATDASSAQTEQVAISITVTAADSESTDGFVITVRESDGLSGLEDATAVTDQDGTATFSFSESNANSYKPTFGVAGDTAVSTTANITVKEGAVRTYTREDGTNLTGTYIGSGTPDDPYLANSLTDLQVINKNATTRDEHYQLTDDINASATIESWNGGNGFEPIANATDEAFTGTLDGNGTTISNLSIDRSGADSVGLISEVGTSGVMENLTLQNASVIGSNDVGVVAGTSNGTIRNVTATGTVAGDNKIGGLVGASNSSAVVADSSTAVTTSGTRQIGGLVGQSSGSVTNSSASGSVTASGGFAGGLVGDLDVTTPEELANVSASGNVSSGGQYVGGLVGLGTSTSSSGNQLTITEAQASGDVNTTYNGGNDAYVGGLAGKLSNVGNVTDVTATGDVSSTSGNDVGGLAGELVHDSTSFTLRNATATGDVTTTGQRVGGLIGAHRNGQALTNATATGNVSTDGNNVGGLIGYQPDDKTVSDVTATGDVSTEGNNAGGLIGQTRASLSDATASGEVQSSTGDKIGGLVGYLKLSAEKTTNVTATGNVSTDGNNVGGLIGHAEGVESTSQTTISTARASGDVTSTDGNDIGGLIGNASFQNDADTVTNASATGDVGTDSATGSSVGGLIGSQSSGQVRNSYARGNVTTSGDNVGGLVGSAAGKQIVDSYARGNITTEGTNVGGIAGKLSGDVKRVYASGQVTGDNKVGGLVGSGGTLSDAYWDKGASTQTNATGNKSGLGTGTPNGVAGYGSIGSDVPATEMQGQSPSKFMSALNYTSTWSLVNGYPQLRAETAPSFASDTTPPTLTSVTSTDGTTIQLTIDGGVSGIDTSSIDNTDFAVSNNSILSTDTNTSGTDTNTTQTVTLSLSSSVETRPVTVDITSQAGGITDRSGNKLSNITTTLPGIDTVSVSDDTNDDGIVTTGDRVQVTVESNTDTNTDTDTDTTLSSVTVNATDYDDETATLSPNGTNVETGASIHSGIIIVGSTPTDGSDQSLTVNVTDDTGNAAVRTIQVSGVTVDTKAPEITSVSRAGGDSVDVSIQSGLSGIEKSSISAADFTVEPGKVASVNTSAVTDGSNQTQTVRIGLTDAIRGKTPTVTINSSSDGILDKAGNGQGEDSTSSNESSDGTESDQGDPEDDIGGINTGIAPAVTLTTSDLDSSTLSTVDVTYNATGEVGSSDDIEIQLYNDNNSTTTPIATRTVGSVEGLTSLTVPSSAVGGGTFTGRATLVNTSAGNTELANKSKQIVAYENVSTSVTAGSLGGKITVKHDFGSLDPANAQIRVSPITIGSKFTTQTVTPAPAQKQGTVTIPVPKQANSRFNVQTEVVDTSRNRQIQSSLGYGCVGSQRDPCSTVSETGTTVVDATTGNSVGIEVNATVDHNRGAVEWYLHPTGSPEQKDISIVDGVDASTPLAVTIAVDDFDPVFMLGTGNADGWEKTGVDKNTKEISINVTPAEAYVEPDIRNPDPREWPLSDHTASKRYGAIVDMIAVSMEGRVNPGYRNHLDGAFIGTNAQAFSVPKSSAGGSDSAGSLSITVAAPHYETDGTTVNTGFYNARIPKSVLAAWGISPGQVTATYKGESVSGSSLTVEDKKGAIFVSMPVTYSSGTVTVSGSQDSSDTTAPTVSNVSLDSDGTGNLTFTVDSNEQLGVATDNVSVSIDGPNTNDVYTFNRDDLIQSGSGPYTYALDLDSAQPYDNGGGTYTATVDTATDSAGNDGGGSGLTDSHDHTVTGSTPTFVSSGTVTTPENPGGTLLDVNAIDGEGGLFDSGVKYTITGGADSSSFTVDGKTGAVSFADSVDFESPADADGDNAYELDVTASTANANATQSISVTITDVDEQPTGQVNLTGGDPGDRTISIVGNKTGYTFDASKIVDPEGTGVSYTWDFGIGDTSTGSTVTRDYDPGSYLEETTVSPTLTVDDGSKQTVIDVSVTFYSDIDGDGLADDNEATGVPTDNDDDNDGIPDDEDQEPALGEMSSISGTITDTNGSRVTQGDVTIISSDGTHRESVSLDSNGKFDTTVPAGNYRLVVENTSAPVHEREDITVGPQTPTSQNLTLEGSGTVAGKFINPDEKSASNIPVQIASRDGGETYYTKTDSTGEYEVAVEPGDYVVAPLGNDSGNASREVSVELGETIQQSVTLDPQPVETAASLSIASGPGSVTADGHQMVVIPEVTDGLLQIQIANNSDPNRDISVVEDPSELENFGVTNETKFRIRVTVTNYTPHTLFWALRDAEFNSKPNATNPTATDIIITGSPVSLATTSTQQKRVGPLVSEDPSTVSWPSGAADTADSQYNQTVYFSVYDLSTRPESLRDRLTGLILSTNAQRISLPEVSNDRLRTWIAGPRYKTASGTKYEGFYQAQIPQSQLEEWGVADHPTHQLFGEYKSSERNLTVEDVDGGISVDVSNISYSASYVDIKADSTAPVPESALEDDSSNQDSGDDSSNQDSGDDSSSQNDDGDNSSNQDSGDDSSSQNDDGDNSSNQDSGDDSSSQNDDGDNSSNQDSGDDSSSQNDDGDDSSSQNDDGDNSSNQDSGDDSSSQNDDGDNSSNQDSGDDSSSQNDDGDNSSNQDSGDDSSSQNDDGDNKPNSAAAVGAESGSEMGGETGGESQAGGGDGSSGSSSDAAGGGSSGGSSSGDSGGSSSGNSGGSSSGNSGGSSSGSGSSTGSMIADALTVITAPLRWFGSLSTAGKAAVAATTGAGAAGAAYGLGGDRIQTPLNIARRRFQSWLRRRIRGSSRSQISKLLARLRRLKWAKIRTQIAGVRKYFTRSYWRELIAKRRRLGSREGMKNWLKSKYRGNRKRKYRGWLRGRLRSGVNWVAGGLLRGAAPAWLGVVSGPAATAVSVITGEIRRWIEDKAMDRFDSTRKRYAKLAIQSSAWITTVETRLWQLLSGEDSPSSSRSLAAIAGESASELNEVGVDSVDQLASADPEQLASALEIDESAVAEWVNRAGHASGSTERPAFIETRNGKRIQARYEQIAEIVQTGVSIPTISVGSVHSITDIGGRQLARVTGWLQGDVSSILSGAFERIQSFSCRLLYRVSIWIYGPSGAVESIDGIGPEYSDRLVQEGITDVAVLSACSAERLSERINVSSSQTYRWITQATAETPDTRGLHQRLVAGVVRVESVFIAMKTKSSVQLESNRLREDHFSSQPLSEKEMNQLAVVGITTVSQLAAINPDRLGAGVGIDTKTAEEWVEMAQVYEMHLNNNS</sequence>
<protein>
    <recommendedName>
        <fullName>Halomucin</fullName>
    </recommendedName>
</protein>
<accession>Q18DN4</accession>
<keyword id="KW-0325">Glycoprotein</keyword>
<keyword id="KW-0430">Lectin</keyword>
<keyword id="KW-1185">Reference proteome</keyword>
<keyword id="KW-0677">Repeat</keyword>
<keyword id="KW-0964">Secreted</keyword>
<keyword id="KW-0732">Signal</keyword>
<proteinExistence type="inferred from homology"/>
<organism>
    <name type="scientific">Haloquadratum walsbyi (strain DSM 16790 / HBSQ001)</name>
    <dbReference type="NCBI Taxonomy" id="362976"/>
    <lineage>
        <taxon>Archaea</taxon>
        <taxon>Methanobacteriati</taxon>
        <taxon>Methanobacteriota</taxon>
        <taxon>Stenosarchaea group</taxon>
        <taxon>Halobacteria</taxon>
        <taxon>Halobacteriales</taxon>
        <taxon>Haloferacaceae</taxon>
        <taxon>Haloquadratum</taxon>
    </lineage>
</organism>
<comment type="function">
    <text>May protect the organism from desiccation stress. May also contribute to the rigidity and maintenance of the unique square cell morphology of H.walsbyi.</text>
</comment>
<comment type="subcellular location">
    <subcellularLocation>
        <location evidence="5">Secreted</location>
    </subcellularLocation>
</comment>
<comment type="PTM">
    <text>Probably glycosylated with sugar containing sialic acid. This may further contribute to its overall negative charge, thereby creating an aqueous shield covering the cells.</text>
</comment>
<feature type="signal peptide" evidence="1">
    <location>
        <begin position="1"/>
        <end position="30"/>
    </location>
</feature>
<feature type="chain" id="PRO_0000259666" description="Halomucin">
    <location>
        <begin position="31"/>
        <end position="9159"/>
    </location>
</feature>
<feature type="domain" description="C-type lectin 1" evidence="2">
    <location>
        <begin position="644"/>
        <end position="776"/>
    </location>
</feature>
<feature type="domain" description="C-type lectin 2" evidence="2">
    <location>
        <begin position="929"/>
        <end position="1060"/>
    </location>
</feature>
<feature type="domain" description="Cadherin" evidence="3">
    <location>
        <begin position="7686"/>
        <end position="7793"/>
    </location>
</feature>
<feature type="region of interest" description="Disordered" evidence="4">
    <location>
        <begin position="1310"/>
        <end position="1351"/>
    </location>
</feature>
<feature type="region of interest" description="V-G-G-L motif-rich region">
    <location>
        <begin position="1756"/>
        <end position="3380"/>
    </location>
</feature>
<feature type="region of interest" description="Disordered" evidence="4">
    <location>
        <begin position="3484"/>
        <end position="3514"/>
    </location>
</feature>
<feature type="region of interest" description="Disordered" evidence="4">
    <location>
        <begin position="4878"/>
        <end position="4912"/>
    </location>
</feature>
<feature type="region of interest" description="Disordered" evidence="4">
    <location>
        <begin position="6570"/>
        <end position="6589"/>
    </location>
</feature>
<feature type="region of interest" description="Disordered" evidence="4">
    <location>
        <begin position="7047"/>
        <end position="7097"/>
    </location>
</feature>
<feature type="region of interest" description="Disordered" evidence="4">
    <location>
        <begin position="7660"/>
        <end position="7702"/>
    </location>
</feature>
<feature type="region of interest" description="Disordered" evidence="4">
    <location>
        <begin position="7888"/>
        <end position="7923"/>
    </location>
</feature>
<feature type="region of interest" description="Disordered" evidence="4">
    <location>
        <begin position="8212"/>
        <end position="8237"/>
    </location>
</feature>
<feature type="region of interest" description="Disordered" evidence="4">
    <location>
        <begin position="8369"/>
        <end position="8614"/>
    </location>
</feature>
<feature type="compositionally biased region" description="Polar residues" evidence="4">
    <location>
        <begin position="1310"/>
        <end position="1332"/>
    </location>
</feature>
<feature type="compositionally biased region" description="Gly residues" evidence="4">
    <location>
        <begin position="3495"/>
        <end position="3505"/>
    </location>
</feature>
<feature type="compositionally biased region" description="Basic and acidic residues" evidence="4">
    <location>
        <begin position="4880"/>
        <end position="4890"/>
    </location>
</feature>
<feature type="compositionally biased region" description="Polar residues" evidence="4">
    <location>
        <begin position="7048"/>
        <end position="7057"/>
    </location>
</feature>
<feature type="compositionally biased region" description="Polar residues" evidence="4">
    <location>
        <begin position="7068"/>
        <end position="7078"/>
    </location>
</feature>
<feature type="compositionally biased region" description="Acidic residues" evidence="4">
    <location>
        <begin position="7079"/>
        <end position="7092"/>
    </location>
</feature>
<feature type="compositionally biased region" description="Polar residues" evidence="4">
    <location>
        <begin position="7681"/>
        <end position="7698"/>
    </location>
</feature>
<feature type="compositionally biased region" description="Acidic residues" evidence="4">
    <location>
        <begin position="7888"/>
        <end position="7898"/>
    </location>
</feature>
<feature type="compositionally biased region" description="Acidic residues" evidence="4">
    <location>
        <begin position="7905"/>
        <end position="7920"/>
    </location>
</feature>
<feature type="compositionally biased region" description="Acidic residues" evidence="4">
    <location>
        <begin position="8378"/>
        <end position="8390"/>
    </location>
</feature>
<feature type="compositionally biased region" description="Low complexity" evidence="4">
    <location>
        <begin position="8391"/>
        <end position="8529"/>
    </location>
</feature>
<feature type="compositionally biased region" description="Low complexity" evidence="4">
    <location>
        <begin position="8538"/>
        <end position="8548"/>
    </location>
</feature>
<feature type="compositionally biased region" description="Gly residues" evidence="4">
    <location>
        <begin position="8549"/>
        <end position="8566"/>
    </location>
</feature>
<feature type="compositionally biased region" description="Gly residues" evidence="4">
    <location>
        <begin position="8574"/>
        <end position="8608"/>
    </location>
</feature>
<reference key="1">
    <citation type="journal article" date="2006" name="BMC Genomics">
        <title>The genome of the square archaeon Haloquadratum walsbyi: life at the limits of water activity.</title>
        <authorList>
            <person name="Bolhuis H."/>
            <person name="Palm P."/>
            <person name="Wende A."/>
            <person name="Falb M."/>
            <person name="Rampp M."/>
            <person name="Rodriguez-Valera F."/>
            <person name="Pfeiffer F."/>
            <person name="Oesterhelt D."/>
        </authorList>
    </citation>
    <scope>NUCLEOTIDE SEQUENCE [LARGE SCALE GENOMIC DNA]</scope>
    <source>
        <strain>DSM 16790 / HBSQ001</strain>
    </source>
</reference>
<gene>
    <name type="primary">hmu</name>
    <name type="ordered locus">HQ_1081A</name>
</gene>
<evidence type="ECO:0000255" key="1"/>
<evidence type="ECO:0000255" key="2">
    <source>
        <dbReference type="PROSITE-ProRule" id="PRU00040"/>
    </source>
</evidence>
<evidence type="ECO:0000255" key="3">
    <source>
        <dbReference type="PROSITE-ProRule" id="PRU00043"/>
    </source>
</evidence>
<evidence type="ECO:0000256" key="4">
    <source>
        <dbReference type="SAM" id="MobiDB-lite"/>
    </source>
</evidence>
<evidence type="ECO:0000305" key="5"/>
<dbReference type="EMBL" id="AM180088">
    <property type="protein sequence ID" value="CAJ51211.1"/>
    <property type="molecule type" value="Genomic_DNA"/>
</dbReference>
<dbReference type="RefSeq" id="WP_011570378.1">
    <property type="nucleotide sequence ID" value="NC_008212.1"/>
</dbReference>
<dbReference type="SMR" id="Q18DN4"/>
<dbReference type="STRING" id="362976.HQ_1081A"/>
<dbReference type="GeneID" id="4194131"/>
<dbReference type="KEGG" id="hwa:HQ_1081A"/>
<dbReference type="eggNOG" id="arCOG03439">
    <property type="taxonomic scope" value="Archaea"/>
</dbReference>
<dbReference type="eggNOG" id="arCOG06233">
    <property type="taxonomic scope" value="Archaea"/>
</dbReference>
<dbReference type="eggNOG" id="arCOG07534">
    <property type="taxonomic scope" value="Archaea"/>
</dbReference>
<dbReference type="eggNOG" id="arCOG07873">
    <property type="taxonomic scope" value="Archaea"/>
</dbReference>
<dbReference type="eggNOG" id="arCOG10954">
    <property type="taxonomic scope" value="Archaea"/>
</dbReference>
<dbReference type="HOGENOM" id="CLU_222693_0_0_2"/>
<dbReference type="Proteomes" id="UP000001975">
    <property type="component" value="Chromosome"/>
</dbReference>
<dbReference type="GO" id="GO:0005576">
    <property type="term" value="C:extracellular region"/>
    <property type="evidence" value="ECO:0007669"/>
    <property type="project" value="UniProtKB-SubCell"/>
</dbReference>
<dbReference type="GO" id="GO:0016020">
    <property type="term" value="C:membrane"/>
    <property type="evidence" value="ECO:0007669"/>
    <property type="project" value="InterPro"/>
</dbReference>
<dbReference type="GO" id="GO:0005509">
    <property type="term" value="F:calcium ion binding"/>
    <property type="evidence" value="ECO:0007669"/>
    <property type="project" value="InterPro"/>
</dbReference>
<dbReference type="GO" id="GO:0030246">
    <property type="term" value="F:carbohydrate binding"/>
    <property type="evidence" value="ECO:0007669"/>
    <property type="project" value="UniProtKB-KW"/>
</dbReference>
<dbReference type="GO" id="GO:0007156">
    <property type="term" value="P:homophilic cell adhesion via plasma membrane adhesion molecules"/>
    <property type="evidence" value="ECO:0007669"/>
    <property type="project" value="InterPro"/>
</dbReference>
<dbReference type="CDD" id="cd11304">
    <property type="entry name" value="Cadherin_repeat"/>
    <property type="match status" value="1"/>
</dbReference>
<dbReference type="Gene3D" id="2.160.20.110">
    <property type="match status" value="21"/>
</dbReference>
<dbReference type="Gene3D" id="1.10.150.20">
    <property type="entry name" value="5' to 3' exonuclease, C-terminal subdomain"/>
    <property type="match status" value="2"/>
</dbReference>
<dbReference type="Gene3D" id="2.60.40.60">
    <property type="entry name" value="Cadherins"/>
    <property type="match status" value="1"/>
</dbReference>
<dbReference type="Gene3D" id="2.60.40.1120">
    <property type="entry name" value="Carboxypeptidase-like, regulatory domain"/>
    <property type="match status" value="1"/>
</dbReference>
<dbReference type="Gene3D" id="3.10.100.10">
    <property type="entry name" value="Mannose-Binding Protein A, subunit A"/>
    <property type="match status" value="2"/>
</dbReference>
<dbReference type="InterPro" id="IPR001304">
    <property type="entry name" value="C-type_lectin-like"/>
</dbReference>
<dbReference type="InterPro" id="IPR016186">
    <property type="entry name" value="C-type_lectin-like/link_sf"/>
</dbReference>
<dbReference type="InterPro" id="IPR002126">
    <property type="entry name" value="Cadherin-like_dom"/>
</dbReference>
<dbReference type="InterPro" id="IPR015919">
    <property type="entry name" value="Cadherin-like_sf"/>
</dbReference>
<dbReference type="InterPro" id="IPR013784">
    <property type="entry name" value="Carb-bd-like_fold"/>
</dbReference>
<dbReference type="InterPro" id="IPR016187">
    <property type="entry name" value="CTDL_fold"/>
</dbReference>
<dbReference type="InterPro" id="IPR011493">
    <property type="entry name" value="GLUG"/>
</dbReference>
<dbReference type="InterPro" id="IPR006626">
    <property type="entry name" value="PbH1"/>
</dbReference>
<dbReference type="Pfam" id="PF07581">
    <property type="entry name" value="Glug"/>
    <property type="match status" value="5"/>
</dbReference>
<dbReference type="SMART" id="SM00112">
    <property type="entry name" value="CA"/>
    <property type="match status" value="1"/>
</dbReference>
<dbReference type="SMART" id="SM00034">
    <property type="entry name" value="CLECT"/>
    <property type="match status" value="2"/>
</dbReference>
<dbReference type="SMART" id="SM00710">
    <property type="entry name" value="PbH1"/>
    <property type="match status" value="13"/>
</dbReference>
<dbReference type="SUPFAM" id="SSF56436">
    <property type="entry name" value="C-type lectin-like"/>
    <property type="match status" value="2"/>
</dbReference>
<dbReference type="SUPFAM" id="SSF49313">
    <property type="entry name" value="Cadherin-like"/>
    <property type="match status" value="1"/>
</dbReference>
<dbReference type="SUPFAM" id="SSF49452">
    <property type="entry name" value="Starch-binding domain-like"/>
    <property type="match status" value="2"/>
</dbReference>
<dbReference type="PROSITE" id="PS50041">
    <property type="entry name" value="C_TYPE_LECTIN_2"/>
    <property type="match status" value="2"/>
</dbReference>
<dbReference type="PROSITE" id="PS50268">
    <property type="entry name" value="CADHERIN_2"/>
    <property type="match status" value="1"/>
</dbReference>
<name>HMU_HALWD</name>